<feature type="chain" id="PRO_0000453159" description="PRAME family member 15">
    <location>
        <begin position="1"/>
        <end position="478"/>
    </location>
</feature>
<feature type="repeat" description="LRR 1; degenerate" evidence="1">
    <location>
        <begin position="99"/>
        <end position="126"/>
    </location>
</feature>
<feature type="repeat" description="LRR 2; degenerate" evidence="1">
    <location>
        <begin position="181"/>
        <end position="205"/>
    </location>
</feature>
<feature type="repeat" description="LRR 3; degenerate" evidence="1">
    <location>
        <begin position="206"/>
        <end position="232"/>
    </location>
</feature>
<feature type="repeat" description="LRR 4; degenerate" evidence="1">
    <location>
        <begin position="233"/>
        <end position="268"/>
    </location>
</feature>
<feature type="repeat" description="LRR 5" evidence="1">
    <location>
        <begin position="269"/>
        <end position="294"/>
    </location>
</feature>
<feature type="repeat" description="LRR 6" evidence="1">
    <location>
        <begin position="295"/>
        <end position="326"/>
    </location>
</feature>
<feature type="repeat" description="LRR 7" evidence="1">
    <location>
        <begin position="327"/>
        <end position="347"/>
    </location>
</feature>
<feature type="repeat" description="LRR 8" evidence="1">
    <location>
        <begin position="351"/>
        <end position="378"/>
    </location>
</feature>
<feature type="repeat" description="LRR 9" evidence="1">
    <location>
        <begin position="379"/>
        <end position="403"/>
    </location>
</feature>
<organism>
    <name type="scientific">Homo sapiens</name>
    <name type="common">Human</name>
    <dbReference type="NCBI Taxonomy" id="9606"/>
    <lineage>
        <taxon>Eukaryota</taxon>
        <taxon>Metazoa</taxon>
        <taxon>Chordata</taxon>
        <taxon>Craniata</taxon>
        <taxon>Vertebrata</taxon>
        <taxon>Euteleostomi</taxon>
        <taxon>Mammalia</taxon>
        <taxon>Eutheria</taxon>
        <taxon>Euarchontoglires</taxon>
        <taxon>Primates</taxon>
        <taxon>Haplorrhini</taxon>
        <taxon>Catarrhini</taxon>
        <taxon>Hominidae</taxon>
        <taxon>Homo</taxon>
    </lineage>
</organism>
<evidence type="ECO:0000250" key="1">
    <source>
        <dbReference type="UniProtKB" id="Q3UWY1"/>
    </source>
</evidence>
<evidence type="ECO:0000305" key="2"/>
<evidence type="ECO:0000312" key="3">
    <source>
        <dbReference type="HGNC" id="HGNC:26764"/>
    </source>
</evidence>
<sequence>MKMSIRTPPRLLELAGRSLLRDQALAMSTLEELPTELFPPLFMEAFSRRRCEALKLMVQAWPFRRLPLRPLIKMPCLEAFQAVLDGLDALLTQGVRPRRWKLQVLDLQDVCENFWMVWSEAMAHGCFLNAKRNKKPVQDCPRMRGRQPLTVFVELWLKNRTLDEYLTYLLLWVKQRKDLLHLCCKKLKILGMPFRNIRSILKMVNLDCIQEVEVNCKWVLPILTQFTPYLGHMRNLQKLVLSHMDVSRYVSPEQKKEIVTQFTTQFLKLRCLQKLYMNSVSFLEGHLDQLLSCLKTSLKVLTITNCVLLESDLKHLSQCPSISQLKTLDLSGIRLTNYSLVPLQILLEKVAATLEYLDLDDCGIIDSQVNAILPALSRCFELNTFSFCGNPICMATLENLLSHTIILKNLCVELYPAPRESYGADGTLCWSRFAQIRAELMNRVRDLRHPKRILFCTDYCPDCGNRSFYDLEADQYCC</sequence>
<reference key="1">
    <citation type="journal article" date="2006" name="Nature">
        <title>The DNA sequence and biological annotation of human chromosome 1.</title>
        <authorList>
            <person name="Gregory S.G."/>
            <person name="Barlow K.F."/>
            <person name="McLay K.E."/>
            <person name="Kaul R."/>
            <person name="Swarbreck D."/>
            <person name="Dunham A."/>
            <person name="Scott C.E."/>
            <person name="Howe K.L."/>
            <person name="Woodfine K."/>
            <person name="Spencer C.C.A."/>
            <person name="Jones M.C."/>
            <person name="Gillson C."/>
            <person name="Searle S."/>
            <person name="Zhou Y."/>
            <person name="Kokocinski F."/>
            <person name="McDonald L."/>
            <person name="Evans R."/>
            <person name="Phillips K."/>
            <person name="Atkinson A."/>
            <person name="Cooper R."/>
            <person name="Jones C."/>
            <person name="Hall R.E."/>
            <person name="Andrews T.D."/>
            <person name="Lloyd C."/>
            <person name="Ainscough R."/>
            <person name="Almeida J.P."/>
            <person name="Ambrose K.D."/>
            <person name="Anderson F."/>
            <person name="Andrew R.W."/>
            <person name="Ashwell R.I.S."/>
            <person name="Aubin K."/>
            <person name="Babbage A.K."/>
            <person name="Bagguley C.L."/>
            <person name="Bailey J."/>
            <person name="Beasley H."/>
            <person name="Bethel G."/>
            <person name="Bird C.P."/>
            <person name="Bray-Allen S."/>
            <person name="Brown J.Y."/>
            <person name="Brown A.J."/>
            <person name="Buckley D."/>
            <person name="Burton J."/>
            <person name="Bye J."/>
            <person name="Carder C."/>
            <person name="Chapman J.C."/>
            <person name="Clark S.Y."/>
            <person name="Clarke G."/>
            <person name="Clee C."/>
            <person name="Cobley V."/>
            <person name="Collier R.E."/>
            <person name="Corby N."/>
            <person name="Coville G.J."/>
            <person name="Davies J."/>
            <person name="Deadman R."/>
            <person name="Dunn M."/>
            <person name="Earthrowl M."/>
            <person name="Ellington A.G."/>
            <person name="Errington H."/>
            <person name="Frankish A."/>
            <person name="Frankland J."/>
            <person name="French L."/>
            <person name="Garner P."/>
            <person name="Garnett J."/>
            <person name="Gay L."/>
            <person name="Ghori M.R.J."/>
            <person name="Gibson R."/>
            <person name="Gilby L.M."/>
            <person name="Gillett W."/>
            <person name="Glithero R.J."/>
            <person name="Grafham D.V."/>
            <person name="Griffiths C."/>
            <person name="Griffiths-Jones S."/>
            <person name="Grocock R."/>
            <person name="Hammond S."/>
            <person name="Harrison E.S.I."/>
            <person name="Hart E."/>
            <person name="Haugen E."/>
            <person name="Heath P.D."/>
            <person name="Holmes S."/>
            <person name="Holt K."/>
            <person name="Howden P.J."/>
            <person name="Hunt A.R."/>
            <person name="Hunt S.E."/>
            <person name="Hunter G."/>
            <person name="Isherwood J."/>
            <person name="James R."/>
            <person name="Johnson C."/>
            <person name="Johnson D."/>
            <person name="Joy A."/>
            <person name="Kay M."/>
            <person name="Kershaw J.K."/>
            <person name="Kibukawa M."/>
            <person name="Kimberley A.M."/>
            <person name="King A."/>
            <person name="Knights A.J."/>
            <person name="Lad H."/>
            <person name="Laird G."/>
            <person name="Lawlor S."/>
            <person name="Leongamornlert D.A."/>
            <person name="Lloyd D.M."/>
            <person name="Loveland J."/>
            <person name="Lovell J."/>
            <person name="Lush M.J."/>
            <person name="Lyne R."/>
            <person name="Martin S."/>
            <person name="Mashreghi-Mohammadi M."/>
            <person name="Matthews L."/>
            <person name="Matthews N.S.W."/>
            <person name="McLaren S."/>
            <person name="Milne S."/>
            <person name="Mistry S."/>
            <person name="Moore M.J.F."/>
            <person name="Nickerson T."/>
            <person name="O'Dell C.N."/>
            <person name="Oliver K."/>
            <person name="Palmeiri A."/>
            <person name="Palmer S.A."/>
            <person name="Parker A."/>
            <person name="Patel D."/>
            <person name="Pearce A.V."/>
            <person name="Peck A.I."/>
            <person name="Pelan S."/>
            <person name="Phelps K."/>
            <person name="Phillimore B.J."/>
            <person name="Plumb R."/>
            <person name="Rajan J."/>
            <person name="Raymond C."/>
            <person name="Rouse G."/>
            <person name="Saenphimmachak C."/>
            <person name="Sehra H.K."/>
            <person name="Sheridan E."/>
            <person name="Shownkeen R."/>
            <person name="Sims S."/>
            <person name="Skuce C.D."/>
            <person name="Smith M."/>
            <person name="Steward C."/>
            <person name="Subramanian S."/>
            <person name="Sycamore N."/>
            <person name="Tracey A."/>
            <person name="Tromans A."/>
            <person name="Van Helmond Z."/>
            <person name="Wall M."/>
            <person name="Wallis J.M."/>
            <person name="White S."/>
            <person name="Whitehead S.L."/>
            <person name="Wilkinson J.E."/>
            <person name="Willey D.L."/>
            <person name="Williams H."/>
            <person name="Wilming L."/>
            <person name="Wray P.W."/>
            <person name="Wu Z."/>
            <person name="Coulson A."/>
            <person name="Vaudin M."/>
            <person name="Sulston J.E."/>
            <person name="Durbin R.M."/>
            <person name="Hubbard T."/>
            <person name="Wooster R."/>
            <person name="Dunham I."/>
            <person name="Carter N.P."/>
            <person name="McVean G."/>
            <person name="Ross M.T."/>
            <person name="Harrow J."/>
            <person name="Olson M.V."/>
            <person name="Beck S."/>
            <person name="Rogers J."/>
            <person name="Bentley D.R."/>
        </authorList>
    </citation>
    <scope>NUCLEOTIDE SEQUENCE [LARGE SCALE GENOMIC DNA]</scope>
</reference>
<reference key="2">
    <citation type="journal article" date="2004" name="Genome Res.">
        <title>The status, quality, and expansion of the NIH full-length cDNA project: the Mammalian Gene Collection (MGC).</title>
        <authorList>
            <consortium name="The MGC Project Team"/>
        </authorList>
    </citation>
    <scope>NUCLEOTIDE SEQUENCE [LARGE SCALE MRNA]</scope>
</reference>
<comment type="similarity">
    <text evidence="2">Belongs to the PRAME family.</text>
</comment>
<gene>
    <name evidence="3" type="primary">PRAMEF15</name>
</gene>
<accession>P0DUQ1</accession>
<accession>B2RPE1</accession>
<accession>Q08EQ1</accession>
<accession>Q5VWM5</accession>
<protein>
    <recommendedName>
        <fullName evidence="2">PRAME family member 15</fullName>
    </recommendedName>
</protein>
<name>PRA15_HUMAN</name>
<dbReference type="EMBL" id="AL365443">
    <property type="status" value="NOT_ANNOTATED_CDS"/>
    <property type="molecule type" value="Genomic_DNA"/>
</dbReference>
<dbReference type="EMBL" id="BC101343">
    <property type="protein sequence ID" value="AAI01344.1"/>
    <property type="molecule type" value="mRNA"/>
</dbReference>
<dbReference type="EMBL" id="BC137391">
    <property type="protein sequence ID" value="AAI37392.1"/>
    <property type="molecule type" value="mRNA"/>
</dbReference>
<dbReference type="CCDS" id="CCDS44059.1"/>
<dbReference type="RefSeq" id="NP_001091846.1">
    <property type="nucleotide sequence ID" value="NM_001098376.3"/>
</dbReference>
<dbReference type="FunCoup" id="P0DUQ1">
    <property type="interactions" value="2"/>
</dbReference>
<dbReference type="iPTMnet" id="P0DUQ1"/>
<dbReference type="PhosphoSitePlus" id="P0DUQ1"/>
<dbReference type="PeptideAtlas" id="P0DUQ1"/>
<dbReference type="Ensembl" id="ENST00000376152.2">
    <property type="protein sequence ID" value="ENSP00000365322.1"/>
    <property type="gene ID" value="ENSG00000204501.7"/>
</dbReference>
<dbReference type="GeneID" id="653619"/>
<dbReference type="KEGG" id="hsa:653619"/>
<dbReference type="MANE-Select" id="ENST00000376152.2">
    <property type="protein sequence ID" value="ENSP00000365322.1"/>
    <property type="RefSeq nucleotide sequence ID" value="NM_001098376.3"/>
    <property type="RefSeq protein sequence ID" value="NP_001091846.1"/>
</dbReference>
<dbReference type="AGR" id="HGNC:26764"/>
<dbReference type="CTD" id="653619"/>
<dbReference type="GeneCards" id="PRAMEF15"/>
<dbReference type="HGNC" id="HGNC:26764">
    <property type="gene designation" value="PRAMEF15"/>
</dbReference>
<dbReference type="HPA" id="ENSG00000204501">
    <property type="expression patterns" value="Not detected"/>
</dbReference>
<dbReference type="neXtProt" id="NX_P0DUQ1"/>
<dbReference type="OpenTargets" id="ENSG00000204501"/>
<dbReference type="InParanoid" id="P0DUQ1"/>
<dbReference type="OMA" id="HINGRTM"/>
<dbReference type="OrthoDB" id="9533139at2759"/>
<dbReference type="PRO" id="PR:P0DUQ1"/>
<dbReference type="Proteomes" id="UP000005640">
    <property type="component" value="Chromosome 1"/>
</dbReference>
<dbReference type="Bgee" id="ENSG00000204501">
    <property type="expression patterns" value="Expressed in male germ line stem cell (sensu Vertebrata) in testis and 4 other cell types or tissues"/>
</dbReference>
<dbReference type="GO" id="GO:0031462">
    <property type="term" value="C:Cul2-RING ubiquitin ligase complex"/>
    <property type="evidence" value="ECO:0000318"/>
    <property type="project" value="GO_Central"/>
</dbReference>
<dbReference type="GO" id="GO:0005737">
    <property type="term" value="C:cytoplasm"/>
    <property type="evidence" value="ECO:0000318"/>
    <property type="project" value="GO_Central"/>
</dbReference>
<dbReference type="GO" id="GO:1990756">
    <property type="term" value="F:ubiquitin-like ligase-substrate adaptor activity"/>
    <property type="evidence" value="ECO:0000318"/>
    <property type="project" value="GO_Central"/>
</dbReference>
<dbReference type="GO" id="GO:0043066">
    <property type="term" value="P:negative regulation of apoptotic process"/>
    <property type="evidence" value="ECO:0007669"/>
    <property type="project" value="InterPro"/>
</dbReference>
<dbReference type="GO" id="GO:0045596">
    <property type="term" value="P:negative regulation of cell differentiation"/>
    <property type="evidence" value="ECO:0007669"/>
    <property type="project" value="InterPro"/>
</dbReference>
<dbReference type="GO" id="GO:0045892">
    <property type="term" value="P:negative regulation of DNA-templated transcription"/>
    <property type="evidence" value="ECO:0007669"/>
    <property type="project" value="InterPro"/>
</dbReference>
<dbReference type="GO" id="GO:0008284">
    <property type="term" value="P:positive regulation of cell population proliferation"/>
    <property type="evidence" value="ECO:0007669"/>
    <property type="project" value="InterPro"/>
</dbReference>
<dbReference type="GO" id="GO:0043161">
    <property type="term" value="P:proteasome-mediated ubiquitin-dependent protein catabolic process"/>
    <property type="evidence" value="ECO:0000318"/>
    <property type="project" value="GO_Central"/>
</dbReference>
<dbReference type="FunFam" id="3.80.10.10:FF:000079">
    <property type="entry name" value="PRAME family member 18"/>
    <property type="match status" value="1"/>
</dbReference>
<dbReference type="Gene3D" id="3.80.10.10">
    <property type="entry name" value="Ribonuclease Inhibitor"/>
    <property type="match status" value="1"/>
</dbReference>
<dbReference type="InterPro" id="IPR032675">
    <property type="entry name" value="LRR_dom_sf"/>
</dbReference>
<dbReference type="InterPro" id="IPR026271">
    <property type="entry name" value="PRAME"/>
</dbReference>
<dbReference type="InterPro" id="IPR050694">
    <property type="entry name" value="PRAME_domain"/>
</dbReference>
<dbReference type="PANTHER" id="PTHR14224:SF19">
    <property type="entry name" value="PRAME FAMILY MEMBER 11-RELATED"/>
    <property type="match status" value="1"/>
</dbReference>
<dbReference type="PANTHER" id="PTHR14224">
    <property type="entry name" value="SIMILAR TO PREFERENTIALLY EXPRESSED ANTIGEN IN MELANOMA-LIKE 3"/>
    <property type="match status" value="1"/>
</dbReference>
<dbReference type="PIRSF" id="PIRSF038286">
    <property type="entry name" value="PRAME"/>
    <property type="match status" value="1"/>
</dbReference>
<dbReference type="SUPFAM" id="SSF52047">
    <property type="entry name" value="RNI-like"/>
    <property type="match status" value="1"/>
</dbReference>
<proteinExistence type="evidence at transcript level"/>
<keyword id="KW-0433">Leucine-rich repeat</keyword>
<keyword id="KW-1185">Reference proteome</keyword>
<keyword id="KW-0677">Repeat</keyword>